<feature type="chain" id="PRO_0000303115" description="Malonate decarboxylase acyl carrier protein">
    <location>
        <begin position="1"/>
        <end position="105"/>
    </location>
</feature>
<feature type="modified residue" description="O-(phosphoribosyl dephospho-coenzyme A)serine" evidence="1">
    <location>
        <position position="28"/>
    </location>
</feature>
<comment type="function">
    <text evidence="1">Subunit of malonate decarboxylase, it is an acyl carrier protein to which acetyl and malonyl thioester residues are bound via a 2'-(5''-phosphoribosyl)-3'-dephospho-CoA prosthetic group and turn over during the catalytic mechanism.</text>
</comment>
<comment type="subcellular location">
    <subcellularLocation>
        <location evidence="1">Cytoplasm</location>
    </subcellularLocation>
</comment>
<comment type="PTM">
    <text evidence="1">Covalently binds the prosthetic group of malonate decarboxylase.</text>
</comment>
<comment type="similarity">
    <text evidence="1">Belongs to the MdcC family.</text>
</comment>
<dbReference type="EMBL" id="CP000050">
    <property type="protein sequence ID" value="AAY47654.1"/>
    <property type="molecule type" value="Genomic_DNA"/>
</dbReference>
<dbReference type="RefSeq" id="WP_011038694.1">
    <property type="nucleotide sequence ID" value="NZ_CP155948.1"/>
</dbReference>
<dbReference type="SMR" id="Q4UZ69"/>
<dbReference type="KEGG" id="xcb:XC_0573"/>
<dbReference type="HOGENOM" id="CLU_173135_0_0_6"/>
<dbReference type="Proteomes" id="UP000000420">
    <property type="component" value="Chromosome"/>
</dbReference>
<dbReference type="GO" id="GO:0005737">
    <property type="term" value="C:cytoplasm"/>
    <property type="evidence" value="ECO:0007669"/>
    <property type="project" value="UniProtKB-SubCell"/>
</dbReference>
<dbReference type="GO" id="GO:0000036">
    <property type="term" value="F:acyl carrier activity"/>
    <property type="evidence" value="ECO:0007669"/>
    <property type="project" value="UniProtKB-UniRule"/>
</dbReference>
<dbReference type="HAMAP" id="MF_00710">
    <property type="entry name" value="Malonate_deCO2ase_dsu"/>
    <property type="match status" value="1"/>
</dbReference>
<dbReference type="InterPro" id="IPR023439">
    <property type="entry name" value="Mal_deCO2ase/Cit_lyase_ACP"/>
</dbReference>
<dbReference type="InterPro" id="IPR009662">
    <property type="entry name" value="Malonate_deCO2ase_dsu"/>
</dbReference>
<dbReference type="NCBIfam" id="TIGR03130">
    <property type="entry name" value="malonate_delta"/>
    <property type="match status" value="1"/>
</dbReference>
<dbReference type="Pfam" id="PF06857">
    <property type="entry name" value="ACP"/>
    <property type="match status" value="1"/>
</dbReference>
<accession>Q4UZ69</accession>
<organism>
    <name type="scientific">Xanthomonas campestris pv. campestris (strain 8004)</name>
    <dbReference type="NCBI Taxonomy" id="314565"/>
    <lineage>
        <taxon>Bacteria</taxon>
        <taxon>Pseudomonadati</taxon>
        <taxon>Pseudomonadota</taxon>
        <taxon>Gammaproteobacteria</taxon>
        <taxon>Lysobacterales</taxon>
        <taxon>Lysobacteraceae</taxon>
        <taxon>Xanthomonas</taxon>
    </lineage>
</organism>
<proteinExistence type="inferred from homology"/>
<sequence>METLRYRFDGRNGARTGLDHALVGVVASGNLEVLVERVPLGGAMEIEIVTAARGFGEIWQAVLDDFAARHSLQDVRISINDVGATPAVVSLRLEQAIDVLQGADA</sequence>
<protein>
    <recommendedName>
        <fullName evidence="1">Malonate decarboxylase acyl carrier protein</fullName>
    </recommendedName>
    <alternativeName>
        <fullName evidence="1">Malonate decarboxylase subunit delta</fullName>
    </alternativeName>
</protein>
<name>MDCC_XANC8</name>
<keyword id="KW-0963">Cytoplasm</keyword>
<keyword id="KW-0597">Phosphoprotein</keyword>
<gene>
    <name evidence="1" type="primary">mdcC</name>
    <name type="ordered locus">XC_0573</name>
</gene>
<reference key="1">
    <citation type="journal article" date="2005" name="Genome Res.">
        <title>Comparative and functional genomic analyses of the pathogenicity of phytopathogen Xanthomonas campestris pv. campestris.</title>
        <authorList>
            <person name="Qian W."/>
            <person name="Jia Y."/>
            <person name="Ren S.-X."/>
            <person name="He Y.-Q."/>
            <person name="Feng J.-X."/>
            <person name="Lu L.-F."/>
            <person name="Sun Q."/>
            <person name="Ying G."/>
            <person name="Tang D.-J."/>
            <person name="Tang H."/>
            <person name="Wu W."/>
            <person name="Hao P."/>
            <person name="Wang L."/>
            <person name="Jiang B.-L."/>
            <person name="Zeng S."/>
            <person name="Gu W.-Y."/>
            <person name="Lu G."/>
            <person name="Rong L."/>
            <person name="Tian Y."/>
            <person name="Yao Z."/>
            <person name="Fu G."/>
            <person name="Chen B."/>
            <person name="Fang R."/>
            <person name="Qiang B."/>
            <person name="Chen Z."/>
            <person name="Zhao G.-P."/>
            <person name="Tang J.-L."/>
            <person name="He C."/>
        </authorList>
    </citation>
    <scope>NUCLEOTIDE SEQUENCE [LARGE SCALE GENOMIC DNA]</scope>
    <source>
        <strain>8004</strain>
    </source>
</reference>
<evidence type="ECO:0000255" key="1">
    <source>
        <dbReference type="HAMAP-Rule" id="MF_00710"/>
    </source>
</evidence>